<protein>
    <recommendedName>
        <fullName evidence="1">tRNA(Met) cytidine acetate ligase</fullName>
        <ecNumber evidence="1">6.3.4.-</ecNumber>
    </recommendedName>
</protein>
<sequence>MKSVGLITEYNPFHNGHQYHINQSKKLTNADVTIAIMSGNFVMRGEPAIYNKFTRAKMALSTADLVIELPATASLSSGDHFAELAVKVADYMSVDTIAFGSENNDIKTLKQLAHSINEIEQSESFSQKVKEGKSYPRIISELLEHHEALASPNNILGISYLKAIAKNAKNINAISIKRENAQHHDSLIQHHQFASGTSIRTSIISQDDHWHHVVPKDIQHLYVTPHITLNQIFPYLKYQIIAMTTDSLKNIYTVTEGFENRLKSNIYEATDFHHFVKLLKTKRYTYTHIQRLLMNVLLNIKPTDVTSNIHAVKVLAMNDRGRQYLKHLKTAFPERQYITNINKSNAHYFTNEIKATHIYNAISGQQQTDFNTPVIQQYR</sequence>
<comment type="function">
    <text evidence="1">Catalyzes the formation of N(4)-acetylcytidine (ac(4)C) at the wobble position of elongator tRNA(Met), using acetate and ATP as substrates. First activates an acetate ion to form acetyladenylate (Ac-AMP) and then transfers the acetyl group to tRNA to form ac(4)C34.</text>
</comment>
<comment type="catalytic activity">
    <reaction evidence="1">
        <text>cytidine(34) in elongator tRNA(Met) + acetate + ATP = N(4)-acetylcytidine(34) in elongator tRNA(Met) + AMP + diphosphate</text>
        <dbReference type="Rhea" id="RHEA:58144"/>
        <dbReference type="Rhea" id="RHEA-COMP:10693"/>
        <dbReference type="Rhea" id="RHEA-COMP:10694"/>
        <dbReference type="ChEBI" id="CHEBI:30089"/>
        <dbReference type="ChEBI" id="CHEBI:30616"/>
        <dbReference type="ChEBI" id="CHEBI:33019"/>
        <dbReference type="ChEBI" id="CHEBI:74900"/>
        <dbReference type="ChEBI" id="CHEBI:82748"/>
        <dbReference type="ChEBI" id="CHEBI:456215"/>
    </reaction>
</comment>
<comment type="subcellular location">
    <subcellularLocation>
        <location evidence="1">Cytoplasm</location>
    </subcellularLocation>
</comment>
<comment type="similarity">
    <text evidence="1">Belongs to the TmcAL family.</text>
</comment>
<dbReference type="EC" id="6.3.4.-" evidence="1"/>
<dbReference type="EMBL" id="BA000033">
    <property type="protein sequence ID" value="BAB94873.1"/>
    <property type="molecule type" value="Genomic_DNA"/>
</dbReference>
<dbReference type="RefSeq" id="WP_000843611.1">
    <property type="nucleotide sequence ID" value="NC_003923.1"/>
</dbReference>
<dbReference type="SMR" id="Q7A154"/>
<dbReference type="KEGG" id="sam:MW1008"/>
<dbReference type="HOGENOM" id="CLU_038915_0_2_9"/>
<dbReference type="GO" id="GO:0005737">
    <property type="term" value="C:cytoplasm"/>
    <property type="evidence" value="ECO:0007669"/>
    <property type="project" value="UniProtKB-SubCell"/>
</dbReference>
<dbReference type="GO" id="GO:0005524">
    <property type="term" value="F:ATP binding"/>
    <property type="evidence" value="ECO:0007669"/>
    <property type="project" value="UniProtKB-KW"/>
</dbReference>
<dbReference type="GO" id="GO:0016879">
    <property type="term" value="F:ligase activity, forming carbon-nitrogen bonds"/>
    <property type="evidence" value="ECO:0007669"/>
    <property type="project" value="UniProtKB-UniRule"/>
</dbReference>
<dbReference type="GO" id="GO:0000049">
    <property type="term" value="F:tRNA binding"/>
    <property type="evidence" value="ECO:0007669"/>
    <property type="project" value="UniProtKB-KW"/>
</dbReference>
<dbReference type="GO" id="GO:0006400">
    <property type="term" value="P:tRNA modification"/>
    <property type="evidence" value="ECO:0007669"/>
    <property type="project" value="UniProtKB-UniRule"/>
</dbReference>
<dbReference type="Gene3D" id="3.40.50.620">
    <property type="entry name" value="HUPs"/>
    <property type="match status" value="1"/>
</dbReference>
<dbReference type="HAMAP" id="MF_01539">
    <property type="entry name" value="TmcAL"/>
    <property type="match status" value="1"/>
</dbReference>
<dbReference type="InterPro" id="IPR014729">
    <property type="entry name" value="Rossmann-like_a/b/a_fold"/>
</dbReference>
<dbReference type="InterPro" id="IPR008513">
    <property type="entry name" value="tRNA(Met)_cyd_acetate_ligase"/>
</dbReference>
<dbReference type="NCBIfam" id="NF010191">
    <property type="entry name" value="PRK13670.1"/>
    <property type="match status" value="1"/>
</dbReference>
<dbReference type="PANTHER" id="PTHR37825">
    <property type="entry name" value="TRNA(MET) CYTIDINE ACETATE LIGASE"/>
    <property type="match status" value="1"/>
</dbReference>
<dbReference type="PANTHER" id="PTHR37825:SF1">
    <property type="entry name" value="TRNA(MET) CYTIDINE ACETATE LIGASE"/>
    <property type="match status" value="1"/>
</dbReference>
<dbReference type="Pfam" id="PF05636">
    <property type="entry name" value="HIGH_NTase1"/>
    <property type="match status" value="1"/>
</dbReference>
<dbReference type="SUPFAM" id="SSF52374">
    <property type="entry name" value="Nucleotidylyl transferase"/>
    <property type="match status" value="1"/>
</dbReference>
<keyword id="KW-0067">ATP-binding</keyword>
<keyword id="KW-0963">Cytoplasm</keyword>
<keyword id="KW-0436">Ligase</keyword>
<keyword id="KW-0547">Nucleotide-binding</keyword>
<keyword id="KW-0694">RNA-binding</keyword>
<keyword id="KW-0819">tRNA processing</keyword>
<keyword id="KW-0820">tRNA-binding</keyword>
<reference key="1">
    <citation type="journal article" date="2002" name="Lancet">
        <title>Genome and virulence determinants of high virulence community-acquired MRSA.</title>
        <authorList>
            <person name="Baba T."/>
            <person name="Takeuchi F."/>
            <person name="Kuroda M."/>
            <person name="Yuzawa H."/>
            <person name="Aoki K."/>
            <person name="Oguchi A."/>
            <person name="Nagai Y."/>
            <person name="Iwama N."/>
            <person name="Asano K."/>
            <person name="Naimi T."/>
            <person name="Kuroda H."/>
            <person name="Cui L."/>
            <person name="Yamamoto K."/>
            <person name="Hiramatsu K."/>
        </authorList>
    </citation>
    <scope>NUCLEOTIDE SEQUENCE [LARGE SCALE GENOMIC DNA]</scope>
    <source>
        <strain>MW2</strain>
    </source>
</reference>
<evidence type="ECO:0000255" key="1">
    <source>
        <dbReference type="HAMAP-Rule" id="MF_01539"/>
    </source>
</evidence>
<proteinExistence type="inferred from homology"/>
<gene>
    <name evidence="1" type="primary">tmcAL</name>
    <name type="ordered locus">MW1008</name>
</gene>
<name>TMCAL_STAAW</name>
<accession>Q7A154</accession>
<feature type="chain" id="PRO_0000147183" description="tRNA(Met) cytidine acetate ligase">
    <location>
        <begin position="1"/>
        <end position="379"/>
    </location>
</feature>
<feature type="binding site" evidence="1">
    <location>
        <begin position="7"/>
        <end position="20"/>
    </location>
    <ligand>
        <name>ATP</name>
        <dbReference type="ChEBI" id="CHEBI:30616"/>
    </ligand>
</feature>
<feature type="binding site" evidence="1">
    <location>
        <position position="100"/>
    </location>
    <ligand>
        <name>ATP</name>
        <dbReference type="ChEBI" id="CHEBI:30616"/>
    </ligand>
</feature>
<feature type="binding site" evidence="1">
    <location>
        <position position="153"/>
    </location>
    <ligand>
        <name>ATP</name>
        <dbReference type="ChEBI" id="CHEBI:30616"/>
    </ligand>
</feature>
<feature type="binding site" evidence="1">
    <location>
        <position position="178"/>
    </location>
    <ligand>
        <name>ATP</name>
        <dbReference type="ChEBI" id="CHEBI:30616"/>
    </ligand>
</feature>
<organism>
    <name type="scientific">Staphylococcus aureus (strain MW2)</name>
    <dbReference type="NCBI Taxonomy" id="196620"/>
    <lineage>
        <taxon>Bacteria</taxon>
        <taxon>Bacillati</taxon>
        <taxon>Bacillota</taxon>
        <taxon>Bacilli</taxon>
        <taxon>Bacillales</taxon>
        <taxon>Staphylococcaceae</taxon>
        <taxon>Staphylococcus</taxon>
    </lineage>
</organism>